<accession>B7NPL8</accession>
<keyword id="KW-0030">Aminoacyl-tRNA synthetase</keyword>
<keyword id="KW-0067">ATP-binding</keyword>
<keyword id="KW-0963">Cytoplasm</keyword>
<keyword id="KW-0436">Ligase</keyword>
<keyword id="KW-0479">Metal-binding</keyword>
<keyword id="KW-0547">Nucleotide-binding</keyword>
<keyword id="KW-0648">Protein biosynthesis</keyword>
<keyword id="KW-0694">RNA-binding</keyword>
<keyword id="KW-0820">tRNA-binding</keyword>
<keyword id="KW-0862">Zinc</keyword>
<protein>
    <recommendedName>
        <fullName evidence="1">Methionine--tRNA ligase</fullName>
        <ecNumber evidence="1">6.1.1.10</ecNumber>
    </recommendedName>
    <alternativeName>
        <fullName evidence="1">Methionyl-tRNA synthetase</fullName>
        <shortName evidence="1">MetRS</shortName>
    </alternativeName>
</protein>
<dbReference type="EC" id="6.1.1.10" evidence="1"/>
<dbReference type="EMBL" id="CU928164">
    <property type="protein sequence ID" value="CAR17039.1"/>
    <property type="molecule type" value="Genomic_DNA"/>
</dbReference>
<dbReference type="RefSeq" id="WP_001295427.1">
    <property type="nucleotide sequence ID" value="NC_011750.1"/>
</dbReference>
<dbReference type="RefSeq" id="YP_002406924.1">
    <property type="nucleotide sequence ID" value="NC_011750.1"/>
</dbReference>
<dbReference type="SMR" id="B7NPL8"/>
<dbReference type="STRING" id="585057.ECIAI39_0902"/>
<dbReference type="GeneID" id="75206361"/>
<dbReference type="KEGG" id="ect:ECIAI39_0902"/>
<dbReference type="PATRIC" id="fig|585057.6.peg.952"/>
<dbReference type="HOGENOM" id="CLU_009710_7_0_6"/>
<dbReference type="Proteomes" id="UP000000749">
    <property type="component" value="Chromosome"/>
</dbReference>
<dbReference type="GO" id="GO:0005829">
    <property type="term" value="C:cytosol"/>
    <property type="evidence" value="ECO:0007669"/>
    <property type="project" value="TreeGrafter"/>
</dbReference>
<dbReference type="GO" id="GO:0005524">
    <property type="term" value="F:ATP binding"/>
    <property type="evidence" value="ECO:0007669"/>
    <property type="project" value="UniProtKB-UniRule"/>
</dbReference>
<dbReference type="GO" id="GO:0046872">
    <property type="term" value="F:metal ion binding"/>
    <property type="evidence" value="ECO:0007669"/>
    <property type="project" value="UniProtKB-KW"/>
</dbReference>
<dbReference type="GO" id="GO:0004825">
    <property type="term" value="F:methionine-tRNA ligase activity"/>
    <property type="evidence" value="ECO:0007669"/>
    <property type="project" value="UniProtKB-UniRule"/>
</dbReference>
<dbReference type="GO" id="GO:0000049">
    <property type="term" value="F:tRNA binding"/>
    <property type="evidence" value="ECO:0007669"/>
    <property type="project" value="UniProtKB-KW"/>
</dbReference>
<dbReference type="GO" id="GO:0006431">
    <property type="term" value="P:methionyl-tRNA aminoacylation"/>
    <property type="evidence" value="ECO:0007669"/>
    <property type="project" value="UniProtKB-UniRule"/>
</dbReference>
<dbReference type="CDD" id="cd07957">
    <property type="entry name" value="Anticodon_Ia_Met"/>
    <property type="match status" value="1"/>
</dbReference>
<dbReference type="CDD" id="cd00814">
    <property type="entry name" value="MetRS_core"/>
    <property type="match status" value="1"/>
</dbReference>
<dbReference type="CDD" id="cd02800">
    <property type="entry name" value="tRNA_bind_EcMetRS_like"/>
    <property type="match status" value="1"/>
</dbReference>
<dbReference type="FunFam" id="1.10.730.10:FF:000005">
    <property type="entry name" value="Methionine--tRNA ligase"/>
    <property type="match status" value="1"/>
</dbReference>
<dbReference type="FunFam" id="2.20.28.20:FF:000001">
    <property type="entry name" value="Methionine--tRNA ligase"/>
    <property type="match status" value="1"/>
</dbReference>
<dbReference type="FunFam" id="2.40.50.140:FF:000042">
    <property type="entry name" value="Methionine--tRNA ligase"/>
    <property type="match status" value="1"/>
</dbReference>
<dbReference type="Gene3D" id="3.40.50.620">
    <property type="entry name" value="HUPs"/>
    <property type="match status" value="1"/>
</dbReference>
<dbReference type="Gene3D" id="1.10.730.10">
    <property type="entry name" value="Isoleucyl-tRNA Synthetase, Domain 1"/>
    <property type="match status" value="1"/>
</dbReference>
<dbReference type="Gene3D" id="2.20.28.20">
    <property type="entry name" value="Methionyl-tRNA synthetase, Zn-domain"/>
    <property type="match status" value="1"/>
</dbReference>
<dbReference type="Gene3D" id="2.40.50.140">
    <property type="entry name" value="Nucleic acid-binding proteins"/>
    <property type="match status" value="1"/>
</dbReference>
<dbReference type="HAMAP" id="MF_00098">
    <property type="entry name" value="Met_tRNA_synth_type1"/>
    <property type="match status" value="1"/>
</dbReference>
<dbReference type="InterPro" id="IPR001412">
    <property type="entry name" value="aa-tRNA-synth_I_CS"/>
</dbReference>
<dbReference type="InterPro" id="IPR041872">
    <property type="entry name" value="Anticodon_Met"/>
</dbReference>
<dbReference type="InterPro" id="IPR004495">
    <property type="entry name" value="Met-tRNA-synth_bsu_C"/>
</dbReference>
<dbReference type="InterPro" id="IPR023458">
    <property type="entry name" value="Met-tRNA_ligase_1"/>
</dbReference>
<dbReference type="InterPro" id="IPR014758">
    <property type="entry name" value="Met-tRNA_synth"/>
</dbReference>
<dbReference type="InterPro" id="IPR015413">
    <property type="entry name" value="Methionyl/Leucyl_tRNA_Synth"/>
</dbReference>
<dbReference type="InterPro" id="IPR033911">
    <property type="entry name" value="MetRS_core"/>
</dbReference>
<dbReference type="InterPro" id="IPR029038">
    <property type="entry name" value="MetRS_Zn"/>
</dbReference>
<dbReference type="InterPro" id="IPR012340">
    <property type="entry name" value="NA-bd_OB-fold"/>
</dbReference>
<dbReference type="InterPro" id="IPR014729">
    <property type="entry name" value="Rossmann-like_a/b/a_fold"/>
</dbReference>
<dbReference type="InterPro" id="IPR002547">
    <property type="entry name" value="tRNA-bd_dom"/>
</dbReference>
<dbReference type="InterPro" id="IPR009080">
    <property type="entry name" value="tRNAsynth_Ia_anticodon-bd"/>
</dbReference>
<dbReference type="NCBIfam" id="TIGR00398">
    <property type="entry name" value="metG"/>
    <property type="match status" value="1"/>
</dbReference>
<dbReference type="NCBIfam" id="TIGR00399">
    <property type="entry name" value="metG_C_term"/>
    <property type="match status" value="1"/>
</dbReference>
<dbReference type="NCBIfam" id="NF001100">
    <property type="entry name" value="PRK00133.1"/>
    <property type="match status" value="1"/>
</dbReference>
<dbReference type="PANTHER" id="PTHR45765">
    <property type="entry name" value="METHIONINE--TRNA LIGASE"/>
    <property type="match status" value="1"/>
</dbReference>
<dbReference type="PANTHER" id="PTHR45765:SF1">
    <property type="entry name" value="METHIONINE--TRNA LIGASE, CYTOPLASMIC"/>
    <property type="match status" value="1"/>
</dbReference>
<dbReference type="Pfam" id="PF19303">
    <property type="entry name" value="Anticodon_3"/>
    <property type="match status" value="1"/>
</dbReference>
<dbReference type="Pfam" id="PF09334">
    <property type="entry name" value="tRNA-synt_1g"/>
    <property type="match status" value="1"/>
</dbReference>
<dbReference type="Pfam" id="PF01588">
    <property type="entry name" value="tRNA_bind"/>
    <property type="match status" value="1"/>
</dbReference>
<dbReference type="PRINTS" id="PR01041">
    <property type="entry name" value="TRNASYNTHMET"/>
</dbReference>
<dbReference type="SUPFAM" id="SSF47323">
    <property type="entry name" value="Anticodon-binding domain of a subclass of class I aminoacyl-tRNA synthetases"/>
    <property type="match status" value="1"/>
</dbReference>
<dbReference type="SUPFAM" id="SSF57770">
    <property type="entry name" value="Methionyl-tRNA synthetase (MetRS), Zn-domain"/>
    <property type="match status" value="1"/>
</dbReference>
<dbReference type="SUPFAM" id="SSF50249">
    <property type="entry name" value="Nucleic acid-binding proteins"/>
    <property type="match status" value="1"/>
</dbReference>
<dbReference type="SUPFAM" id="SSF52374">
    <property type="entry name" value="Nucleotidylyl transferase"/>
    <property type="match status" value="1"/>
</dbReference>
<dbReference type="PROSITE" id="PS00178">
    <property type="entry name" value="AA_TRNA_LIGASE_I"/>
    <property type="match status" value="1"/>
</dbReference>
<dbReference type="PROSITE" id="PS50886">
    <property type="entry name" value="TRBD"/>
    <property type="match status" value="1"/>
</dbReference>
<organism>
    <name type="scientific">Escherichia coli O7:K1 (strain IAI39 / ExPEC)</name>
    <dbReference type="NCBI Taxonomy" id="585057"/>
    <lineage>
        <taxon>Bacteria</taxon>
        <taxon>Pseudomonadati</taxon>
        <taxon>Pseudomonadota</taxon>
        <taxon>Gammaproteobacteria</taxon>
        <taxon>Enterobacterales</taxon>
        <taxon>Enterobacteriaceae</taxon>
        <taxon>Escherichia</taxon>
    </lineage>
</organism>
<gene>
    <name evidence="1" type="primary">metG</name>
    <name type="ordered locus">ECIAI39_0902</name>
</gene>
<sequence>MTQVAKKILVTCALPYANGSIHLGHMLEHIQADVWVRYQRMRGHEVNFICADDAHGTPIMLKAQQLGITPEQMIGEMSQEHQTDFAGFNISYDNYHSTHSEENRQLSELIYSRLKENGFIKNRTISQLYDPEKGMFLPDRFVKGTCPKCKSPDQYGDNCEVCGATYSPTELIEPKSVVSGATPVMRDSEHFFFDLPSFSEMLQAWTRSGALQEQVANKMQEWFESGLQQWDISRDAPYFGFEIPNAPGKYFYVWLDAPIGYMGSFKNLCDKRGDSVSFDEYWKKDSTAELYHFIGKDIVYFHSLFWPAMLEGSNFRKPTNLFVHGYVTVNGAKMSKSRGTFIKASTWLNHFDADSLRYYYTAKLSSRIDDIDLNLEDFVQRVNADIVNKVVNLASRNAGFINKRFDGVLASELADPQLYKTFTDAAEVIGEAWESREFGKAVREIMALADLANRYVDEQAPWVVAKQEGRDADLQAICSMGINLFRVLMTYLKPVLPKLTERAEAFLNTELTWDGIQQPLLGHKVNPFKALYNRIDMKQVEALVEASKEEVKAAAAPVTGPLADDPIQETITFDDFAKVDLRVALIENAEFVEGSDKLLRLTLDLGGEKRNVFSGIRSAYPDPQALIGRHTIMVANLAPRKMRFGISEGMVMAAGPGGKDIFLLSPDAGAKPGHQVK</sequence>
<evidence type="ECO:0000255" key="1">
    <source>
        <dbReference type="HAMAP-Rule" id="MF_00098"/>
    </source>
</evidence>
<proteinExistence type="inferred from homology"/>
<feature type="chain" id="PRO_1000199288" description="Methionine--tRNA ligase">
    <location>
        <begin position="1"/>
        <end position="677"/>
    </location>
</feature>
<feature type="domain" description="tRNA-binding" evidence="1">
    <location>
        <begin position="575"/>
        <end position="677"/>
    </location>
</feature>
<feature type="short sequence motif" description="'HIGH' region">
    <location>
        <begin position="15"/>
        <end position="25"/>
    </location>
</feature>
<feature type="short sequence motif" description="'KMSKS' region">
    <location>
        <begin position="333"/>
        <end position="337"/>
    </location>
</feature>
<feature type="binding site" evidence="1">
    <location>
        <position position="146"/>
    </location>
    <ligand>
        <name>Zn(2+)</name>
        <dbReference type="ChEBI" id="CHEBI:29105"/>
    </ligand>
</feature>
<feature type="binding site" evidence="1">
    <location>
        <position position="149"/>
    </location>
    <ligand>
        <name>Zn(2+)</name>
        <dbReference type="ChEBI" id="CHEBI:29105"/>
    </ligand>
</feature>
<feature type="binding site" evidence="1">
    <location>
        <position position="159"/>
    </location>
    <ligand>
        <name>Zn(2+)</name>
        <dbReference type="ChEBI" id="CHEBI:29105"/>
    </ligand>
</feature>
<feature type="binding site" evidence="1">
    <location>
        <position position="162"/>
    </location>
    <ligand>
        <name>Zn(2+)</name>
        <dbReference type="ChEBI" id="CHEBI:29105"/>
    </ligand>
</feature>
<feature type="binding site" evidence="1">
    <location>
        <position position="336"/>
    </location>
    <ligand>
        <name>ATP</name>
        <dbReference type="ChEBI" id="CHEBI:30616"/>
    </ligand>
</feature>
<name>SYM_ECO7I</name>
<comment type="function">
    <text evidence="1">Is required not only for elongation of protein synthesis but also for the initiation of all mRNA translation through initiator tRNA(fMet) aminoacylation.</text>
</comment>
<comment type="catalytic activity">
    <reaction evidence="1">
        <text>tRNA(Met) + L-methionine + ATP = L-methionyl-tRNA(Met) + AMP + diphosphate</text>
        <dbReference type="Rhea" id="RHEA:13481"/>
        <dbReference type="Rhea" id="RHEA-COMP:9667"/>
        <dbReference type="Rhea" id="RHEA-COMP:9698"/>
        <dbReference type="ChEBI" id="CHEBI:30616"/>
        <dbReference type="ChEBI" id="CHEBI:33019"/>
        <dbReference type="ChEBI" id="CHEBI:57844"/>
        <dbReference type="ChEBI" id="CHEBI:78442"/>
        <dbReference type="ChEBI" id="CHEBI:78530"/>
        <dbReference type="ChEBI" id="CHEBI:456215"/>
        <dbReference type="EC" id="6.1.1.10"/>
    </reaction>
</comment>
<comment type="cofactor">
    <cofactor evidence="1">
        <name>Zn(2+)</name>
        <dbReference type="ChEBI" id="CHEBI:29105"/>
    </cofactor>
    <text evidence="1">Binds 1 zinc ion per subunit.</text>
</comment>
<comment type="subunit">
    <text evidence="1">Homodimer.</text>
</comment>
<comment type="subcellular location">
    <subcellularLocation>
        <location evidence="1">Cytoplasm</location>
    </subcellularLocation>
</comment>
<comment type="similarity">
    <text evidence="1">Belongs to the class-I aminoacyl-tRNA synthetase family. MetG type 1 subfamily.</text>
</comment>
<reference key="1">
    <citation type="journal article" date="2009" name="PLoS Genet.">
        <title>Organised genome dynamics in the Escherichia coli species results in highly diverse adaptive paths.</title>
        <authorList>
            <person name="Touchon M."/>
            <person name="Hoede C."/>
            <person name="Tenaillon O."/>
            <person name="Barbe V."/>
            <person name="Baeriswyl S."/>
            <person name="Bidet P."/>
            <person name="Bingen E."/>
            <person name="Bonacorsi S."/>
            <person name="Bouchier C."/>
            <person name="Bouvet O."/>
            <person name="Calteau A."/>
            <person name="Chiapello H."/>
            <person name="Clermont O."/>
            <person name="Cruveiller S."/>
            <person name="Danchin A."/>
            <person name="Diard M."/>
            <person name="Dossat C."/>
            <person name="Karoui M.E."/>
            <person name="Frapy E."/>
            <person name="Garry L."/>
            <person name="Ghigo J.M."/>
            <person name="Gilles A.M."/>
            <person name="Johnson J."/>
            <person name="Le Bouguenec C."/>
            <person name="Lescat M."/>
            <person name="Mangenot S."/>
            <person name="Martinez-Jehanne V."/>
            <person name="Matic I."/>
            <person name="Nassif X."/>
            <person name="Oztas S."/>
            <person name="Petit M.A."/>
            <person name="Pichon C."/>
            <person name="Rouy Z."/>
            <person name="Ruf C.S."/>
            <person name="Schneider D."/>
            <person name="Tourret J."/>
            <person name="Vacherie B."/>
            <person name="Vallenet D."/>
            <person name="Medigue C."/>
            <person name="Rocha E.P.C."/>
            <person name="Denamur E."/>
        </authorList>
    </citation>
    <scope>NUCLEOTIDE SEQUENCE [LARGE SCALE GENOMIC DNA]</scope>
    <source>
        <strain>IAI39 / ExPEC</strain>
    </source>
</reference>